<feature type="chain" id="PRO_0000170768" description="Putative sulfoquinovose importer">
    <location>
        <begin position="1"/>
        <end position="473"/>
    </location>
</feature>
<feature type="transmembrane region" description="Helical" evidence="2">
    <location>
        <begin position="18"/>
        <end position="38"/>
    </location>
</feature>
<feature type="transmembrane region" description="Helical" evidence="2">
    <location>
        <begin position="45"/>
        <end position="65"/>
    </location>
</feature>
<feature type="transmembrane region" description="Helical" evidence="2">
    <location>
        <begin position="88"/>
        <end position="108"/>
    </location>
</feature>
<feature type="transmembrane region" description="Helical" evidence="2">
    <location>
        <begin position="110"/>
        <end position="130"/>
    </location>
</feature>
<feature type="transmembrane region" description="Helical" evidence="2">
    <location>
        <begin position="160"/>
        <end position="180"/>
    </location>
</feature>
<feature type="transmembrane region" description="Helical" evidence="2">
    <location>
        <begin position="187"/>
        <end position="207"/>
    </location>
</feature>
<feature type="transmembrane region" description="Helical" evidence="2">
    <location>
        <begin position="239"/>
        <end position="259"/>
    </location>
</feature>
<feature type="transmembrane region" description="Helical" evidence="2">
    <location>
        <begin position="276"/>
        <end position="296"/>
    </location>
</feature>
<feature type="transmembrane region" description="Helical" evidence="2">
    <location>
        <begin position="317"/>
        <end position="337"/>
    </location>
</feature>
<feature type="transmembrane region" description="Helical" evidence="2">
    <location>
        <begin position="380"/>
        <end position="400"/>
    </location>
</feature>
<feature type="transmembrane region" description="Helical" evidence="2">
    <location>
        <begin position="415"/>
        <end position="435"/>
    </location>
</feature>
<protein>
    <recommendedName>
        <fullName>Putative sulfoquinovose importer</fullName>
    </recommendedName>
</protein>
<accession>Q9L7R4</accession>
<dbReference type="EMBL" id="AF220438">
    <property type="protein sequence ID" value="AAF27927.1"/>
    <property type="molecule type" value="Genomic_DNA"/>
</dbReference>
<dbReference type="EMBL" id="AE006468">
    <property type="protein sequence ID" value="AAL22856.1"/>
    <property type="molecule type" value="Genomic_DNA"/>
</dbReference>
<dbReference type="RefSeq" id="NP_462897.1">
    <property type="nucleotide sequence ID" value="NC_003197.2"/>
</dbReference>
<dbReference type="RefSeq" id="WP_000064888.1">
    <property type="nucleotide sequence ID" value="NC_003197.2"/>
</dbReference>
<dbReference type="SMR" id="Q9L7R4"/>
<dbReference type="STRING" id="99287.STM4017"/>
<dbReference type="PaxDb" id="99287-STM4017"/>
<dbReference type="GeneID" id="1255543"/>
<dbReference type="KEGG" id="stm:STM4017"/>
<dbReference type="PATRIC" id="fig|99287.12.peg.4232"/>
<dbReference type="HOGENOM" id="CLU_027408_0_1_6"/>
<dbReference type="OMA" id="MAFFGTA"/>
<dbReference type="PhylomeDB" id="Q9L7R4"/>
<dbReference type="BioCyc" id="SENT99287:STM4017-MONOMER"/>
<dbReference type="PHI-base" id="PHI:6543"/>
<dbReference type="Proteomes" id="UP000001014">
    <property type="component" value="Chromosome"/>
</dbReference>
<dbReference type="GO" id="GO:0005886">
    <property type="term" value="C:plasma membrane"/>
    <property type="evidence" value="ECO:0000318"/>
    <property type="project" value="GO_Central"/>
</dbReference>
<dbReference type="GO" id="GO:0015293">
    <property type="term" value="F:symporter activity"/>
    <property type="evidence" value="ECO:0007669"/>
    <property type="project" value="UniProtKB-KW"/>
</dbReference>
<dbReference type="GO" id="GO:0008643">
    <property type="term" value="P:carbohydrate transport"/>
    <property type="evidence" value="ECO:0007669"/>
    <property type="project" value="InterPro"/>
</dbReference>
<dbReference type="GO" id="GO:0006814">
    <property type="term" value="P:sodium ion transport"/>
    <property type="evidence" value="ECO:0007669"/>
    <property type="project" value="InterPro"/>
</dbReference>
<dbReference type="GO" id="GO:0055085">
    <property type="term" value="P:transmembrane transport"/>
    <property type="evidence" value="ECO:0000318"/>
    <property type="project" value="GO_Central"/>
</dbReference>
<dbReference type="CDD" id="cd17332">
    <property type="entry name" value="MFS_MelB_like"/>
    <property type="match status" value="1"/>
</dbReference>
<dbReference type="FunFam" id="1.20.1250.20:FF:000063">
    <property type="entry name" value="MFS transporter"/>
    <property type="match status" value="1"/>
</dbReference>
<dbReference type="Gene3D" id="1.20.1250.20">
    <property type="entry name" value="MFS general substrate transporter like domains"/>
    <property type="match status" value="1"/>
</dbReference>
<dbReference type="InterPro" id="IPR039672">
    <property type="entry name" value="MFS_2"/>
</dbReference>
<dbReference type="InterPro" id="IPR036259">
    <property type="entry name" value="MFS_trans_sf"/>
</dbReference>
<dbReference type="InterPro" id="IPR001927">
    <property type="entry name" value="Na/Gal_symport"/>
</dbReference>
<dbReference type="InterPro" id="IPR018043">
    <property type="entry name" value="Na/Gal_symport_CS"/>
</dbReference>
<dbReference type="NCBIfam" id="TIGR00792">
    <property type="entry name" value="gph"/>
    <property type="match status" value="1"/>
</dbReference>
<dbReference type="PANTHER" id="PTHR11328">
    <property type="entry name" value="MAJOR FACILITATOR SUPERFAMILY DOMAIN-CONTAINING PROTEIN"/>
    <property type="match status" value="1"/>
</dbReference>
<dbReference type="PANTHER" id="PTHR11328:SF43">
    <property type="entry name" value="SULFOQUINOVOSE IMPORTER-RELATED"/>
    <property type="match status" value="1"/>
</dbReference>
<dbReference type="Pfam" id="PF13347">
    <property type="entry name" value="MFS_2"/>
    <property type="match status" value="1"/>
</dbReference>
<dbReference type="SUPFAM" id="SSF103473">
    <property type="entry name" value="MFS general substrate transporter"/>
    <property type="match status" value="1"/>
</dbReference>
<dbReference type="PROSITE" id="PS00872">
    <property type="entry name" value="NA_GALACTOSIDE_SYMP"/>
    <property type="match status" value="1"/>
</dbReference>
<evidence type="ECO:0000250" key="1"/>
<evidence type="ECO:0000255" key="2"/>
<evidence type="ECO:0000305" key="3"/>
<gene>
    <name type="primary">yihO</name>
    <name type="ordered locus">STM4017</name>
</gene>
<keyword id="KW-0997">Cell inner membrane</keyword>
<keyword id="KW-1003">Cell membrane</keyword>
<keyword id="KW-0472">Membrane</keyword>
<keyword id="KW-1185">Reference proteome</keyword>
<keyword id="KW-0769">Symport</keyword>
<keyword id="KW-0812">Transmembrane</keyword>
<keyword id="KW-1133">Transmembrane helix</keyword>
<keyword id="KW-0813">Transport</keyword>
<proteinExistence type="inferred from homology"/>
<comment type="function">
    <text evidence="1">Could be involved in sulfoquinovose import.</text>
</comment>
<comment type="subcellular location">
    <subcellularLocation>
        <location evidence="3">Cell inner membrane</location>
        <topology evidence="3">Multi-pass membrane protein</topology>
    </subcellularLocation>
</comment>
<comment type="similarity">
    <text evidence="3">Belongs to the sodium:galactoside symporter (TC 2.A.2) family.</text>
</comment>
<reference key="1">
    <citation type="submission" date="2000-01" db="EMBL/GenBank/DDBJ databases">
        <title>Utilization of dihydroorotate as sole pyrimidine source by Salmonella typhimurium.</title>
        <authorList>
            <person name="Krogan N.J."/>
            <person name="Zhang R."/>
            <person name="Neuhard J."/>
            <person name="Kelln R.A."/>
        </authorList>
    </citation>
    <scope>NUCLEOTIDE SEQUENCE [GENOMIC DNA]</scope>
    <source>
        <strain>LT2</strain>
    </source>
</reference>
<reference key="2">
    <citation type="journal article" date="2001" name="Nature">
        <title>Complete genome sequence of Salmonella enterica serovar Typhimurium LT2.</title>
        <authorList>
            <person name="McClelland M."/>
            <person name="Sanderson K.E."/>
            <person name="Spieth J."/>
            <person name="Clifton S.W."/>
            <person name="Latreille P."/>
            <person name="Courtney L."/>
            <person name="Porwollik S."/>
            <person name="Ali J."/>
            <person name="Dante M."/>
            <person name="Du F."/>
            <person name="Hou S."/>
            <person name="Layman D."/>
            <person name="Leonard S."/>
            <person name="Nguyen C."/>
            <person name="Scott K."/>
            <person name="Holmes A."/>
            <person name="Grewal N."/>
            <person name="Mulvaney E."/>
            <person name="Ryan E."/>
            <person name="Sun H."/>
            <person name="Florea L."/>
            <person name="Miller W."/>
            <person name="Stoneking T."/>
            <person name="Nhan M."/>
            <person name="Waterston R."/>
            <person name="Wilson R.K."/>
        </authorList>
    </citation>
    <scope>NUCLEOTIDE SEQUENCE [LARGE SCALE GENOMIC DNA]</scope>
    <source>
        <strain>LT2 / SGSC1412 / ATCC 700720</strain>
    </source>
</reference>
<name>YIHO_SALTY</name>
<sequence>MSNHDPLTLKLSLREKCAYGVGDFGSNLMLCIGTLYLLKFYTDELGMPAYYGGIIFLVAKFFTAFTDMLTGVLLDSRRNIGAKGKFRPFILYASFPVALVATAQFFATHFTLPVKTAFATVLFMLFGLFYSLMNCSYGAMVPAITKNPHERAQLAAWRQGGATIGLLLCTVGFMPIQALFTRSPSLGYLIAAVIFSVCGLFSMWWCFSGVKERYIETVPDTHKPSILKSFCAIFRNPPLLVLCVANLCTLAAFNIKLAIQVYYTQYVLNDIHLLSWMGFFSMGCILIGVLLVPAAVKRFGKKQVYLGGLILWAVGDILNFIWGGTSFLFVIFSCIAFFGTAFVNSLNWALVPDTVDYGEWKTGIRAEGSVYTGYTFSRKISAALAGFLPGIMLTQIGYIPNIAQSDTTLLGLRQLIFLWPCGLAIIAALTMGFFYKLNEQRFAFIIEEIAQRKKTGNQIVATNNKQSISTVNN</sequence>
<organism>
    <name type="scientific">Salmonella typhimurium (strain LT2 / SGSC1412 / ATCC 700720)</name>
    <dbReference type="NCBI Taxonomy" id="99287"/>
    <lineage>
        <taxon>Bacteria</taxon>
        <taxon>Pseudomonadati</taxon>
        <taxon>Pseudomonadota</taxon>
        <taxon>Gammaproteobacteria</taxon>
        <taxon>Enterobacterales</taxon>
        <taxon>Enterobacteriaceae</taxon>
        <taxon>Salmonella</taxon>
    </lineage>
</organism>